<gene>
    <name evidence="1" type="primary">psd</name>
    <name type="ordered locus">MCA1409</name>
</gene>
<proteinExistence type="inferred from homology"/>
<name>PSD_METCA</name>
<organism>
    <name type="scientific">Methylococcus capsulatus (strain ATCC 33009 / NCIMB 11132 / Bath)</name>
    <dbReference type="NCBI Taxonomy" id="243233"/>
    <lineage>
        <taxon>Bacteria</taxon>
        <taxon>Pseudomonadati</taxon>
        <taxon>Pseudomonadota</taxon>
        <taxon>Gammaproteobacteria</taxon>
        <taxon>Methylococcales</taxon>
        <taxon>Methylococcaceae</taxon>
        <taxon>Methylococcus</taxon>
    </lineage>
</organism>
<sequence>MIMAALPFKLFASIQYLLPQHGLSRFVHWAVRIRQPWFKNALIRAFCRFYRVDLAESVCSSPESFECFNAFFTRALKPGVRSVCSEPDAIACPADGMISQLGAIKGTRLFQAKGRCFELAELLGGDRSRTEAFENGSFVTVYLSPRDYHRVHMPVAGTLAAMTHVPGALFSVNVATTENVPNLFARNERLICYFDTAGGPMAVILVGAIFVSSIETVWHGEVTPPRSKTIRRWDYSGQGLRFERGAEIGRFNMGSTVIVLFGPGHARWRAGIGAGMSVKMGLSLGSCR</sequence>
<feature type="chain" id="PRO_0000029679" description="Phosphatidylserine decarboxylase beta chain" evidence="1">
    <location>
        <begin position="1"/>
        <end position="254"/>
    </location>
</feature>
<feature type="chain" id="PRO_0000029680" description="Phosphatidylserine decarboxylase alpha chain" evidence="1">
    <location>
        <begin position="255"/>
        <end position="288"/>
    </location>
</feature>
<feature type="active site" description="Charge relay system; for autoendoproteolytic cleavage activity" evidence="1">
    <location>
        <position position="95"/>
    </location>
</feature>
<feature type="active site" description="Charge relay system; for autoendoproteolytic cleavage activity" evidence="1">
    <location>
        <position position="152"/>
    </location>
</feature>
<feature type="active site" description="Charge relay system; for autoendoproteolytic cleavage activity" evidence="1">
    <location>
        <position position="255"/>
    </location>
</feature>
<feature type="active site" description="Schiff-base intermediate with substrate; via pyruvic acid; for decarboxylase activity" evidence="1">
    <location>
        <position position="255"/>
    </location>
</feature>
<feature type="site" description="Cleavage (non-hydrolytic); by autocatalysis" evidence="1">
    <location>
        <begin position="254"/>
        <end position="255"/>
    </location>
</feature>
<feature type="modified residue" description="Pyruvic acid (Ser); by autocatalysis" evidence="1">
    <location>
        <position position="255"/>
    </location>
</feature>
<comment type="function">
    <text evidence="1">Catalyzes the formation of phosphatidylethanolamine (PtdEtn) from phosphatidylserine (PtdSer).</text>
</comment>
<comment type="catalytic activity">
    <reaction evidence="1">
        <text>a 1,2-diacyl-sn-glycero-3-phospho-L-serine + H(+) = a 1,2-diacyl-sn-glycero-3-phosphoethanolamine + CO2</text>
        <dbReference type="Rhea" id="RHEA:20828"/>
        <dbReference type="ChEBI" id="CHEBI:15378"/>
        <dbReference type="ChEBI" id="CHEBI:16526"/>
        <dbReference type="ChEBI" id="CHEBI:57262"/>
        <dbReference type="ChEBI" id="CHEBI:64612"/>
        <dbReference type="EC" id="4.1.1.65"/>
    </reaction>
</comment>
<comment type="cofactor">
    <cofactor evidence="1">
        <name>pyruvate</name>
        <dbReference type="ChEBI" id="CHEBI:15361"/>
    </cofactor>
    <text evidence="1">Binds 1 pyruvoyl group covalently per subunit.</text>
</comment>
<comment type="pathway">
    <text evidence="1">Phospholipid metabolism; phosphatidylethanolamine biosynthesis; phosphatidylethanolamine from CDP-diacylglycerol: step 2/2.</text>
</comment>
<comment type="subunit">
    <text evidence="1">Heterodimer of a large membrane-associated beta subunit and a small pyruvoyl-containing alpha subunit.</text>
</comment>
<comment type="subcellular location">
    <subcellularLocation>
        <location evidence="1">Cell membrane</location>
        <topology evidence="1">Peripheral membrane protein</topology>
    </subcellularLocation>
</comment>
<comment type="PTM">
    <text evidence="1">Is synthesized initially as an inactive proenzyme. Formation of the active enzyme involves a self-maturation process in which the active site pyruvoyl group is generated from an internal serine residue via an autocatalytic post-translational modification. Two non-identical subunits are generated from the proenzyme in this reaction, and the pyruvate is formed at the N-terminus of the alpha chain, which is derived from the carboxyl end of the proenzyme. The autoendoproteolytic cleavage occurs by a canonical serine protease mechanism, in which the side chain hydroxyl group of the serine supplies its oxygen atom to form the C-terminus of the beta chain, while the remainder of the serine residue undergoes an oxidative deamination to produce ammonia and the pyruvoyl prosthetic group on the alpha chain. During this reaction, the Ser that is part of the protease active site of the proenzyme becomes the pyruvoyl prosthetic group, which constitutes an essential element of the active site of the mature decarboxylase.</text>
</comment>
<comment type="similarity">
    <text evidence="1">Belongs to the phosphatidylserine decarboxylase family. PSD-B subfamily. Prokaryotic type I sub-subfamily.</text>
</comment>
<keyword id="KW-1003">Cell membrane</keyword>
<keyword id="KW-0210">Decarboxylase</keyword>
<keyword id="KW-0444">Lipid biosynthesis</keyword>
<keyword id="KW-0443">Lipid metabolism</keyword>
<keyword id="KW-0456">Lyase</keyword>
<keyword id="KW-0472">Membrane</keyword>
<keyword id="KW-0594">Phospholipid biosynthesis</keyword>
<keyword id="KW-1208">Phospholipid metabolism</keyword>
<keyword id="KW-0670">Pyruvate</keyword>
<keyword id="KW-1185">Reference proteome</keyword>
<keyword id="KW-0865">Zymogen</keyword>
<accession>Q608T0</accession>
<reference key="1">
    <citation type="journal article" date="2004" name="PLoS Biol.">
        <title>Genomic insights into methanotrophy: the complete genome sequence of Methylococcus capsulatus (Bath).</title>
        <authorList>
            <person name="Ward N.L."/>
            <person name="Larsen O."/>
            <person name="Sakwa J."/>
            <person name="Bruseth L."/>
            <person name="Khouri H.M."/>
            <person name="Durkin A.S."/>
            <person name="Dimitrov G."/>
            <person name="Jiang L."/>
            <person name="Scanlan D."/>
            <person name="Kang K.H."/>
            <person name="Lewis M.R."/>
            <person name="Nelson K.E."/>
            <person name="Methe B.A."/>
            <person name="Wu M."/>
            <person name="Heidelberg J.F."/>
            <person name="Paulsen I.T."/>
            <person name="Fouts D.E."/>
            <person name="Ravel J."/>
            <person name="Tettelin H."/>
            <person name="Ren Q."/>
            <person name="Read T.D."/>
            <person name="DeBoy R.T."/>
            <person name="Seshadri R."/>
            <person name="Salzberg S.L."/>
            <person name="Jensen H.B."/>
            <person name="Birkeland N.K."/>
            <person name="Nelson W.C."/>
            <person name="Dodson R.J."/>
            <person name="Grindhaug S.H."/>
            <person name="Holt I.E."/>
            <person name="Eidhammer I."/>
            <person name="Jonasen I."/>
            <person name="Vanaken S."/>
            <person name="Utterback T.R."/>
            <person name="Feldblyum T.V."/>
            <person name="Fraser C.M."/>
            <person name="Lillehaug J.R."/>
            <person name="Eisen J.A."/>
        </authorList>
    </citation>
    <scope>NUCLEOTIDE SEQUENCE [LARGE SCALE GENOMIC DNA]</scope>
    <source>
        <strain>ATCC 33009 / NCIMB 11132 / Bath</strain>
    </source>
</reference>
<dbReference type="EC" id="4.1.1.65" evidence="1"/>
<dbReference type="EMBL" id="AE017282">
    <property type="protein sequence ID" value="AAU92319.1"/>
    <property type="molecule type" value="Genomic_DNA"/>
</dbReference>
<dbReference type="SMR" id="Q608T0"/>
<dbReference type="STRING" id="243233.MCA1409"/>
<dbReference type="KEGG" id="mca:MCA1409"/>
<dbReference type="eggNOG" id="COG0688">
    <property type="taxonomic scope" value="Bacteria"/>
</dbReference>
<dbReference type="HOGENOM" id="CLU_029061_4_1_6"/>
<dbReference type="UniPathway" id="UPA00558">
    <property type="reaction ID" value="UER00616"/>
</dbReference>
<dbReference type="Proteomes" id="UP000006821">
    <property type="component" value="Chromosome"/>
</dbReference>
<dbReference type="GO" id="GO:0005886">
    <property type="term" value="C:plasma membrane"/>
    <property type="evidence" value="ECO:0007669"/>
    <property type="project" value="UniProtKB-SubCell"/>
</dbReference>
<dbReference type="GO" id="GO:0004609">
    <property type="term" value="F:phosphatidylserine decarboxylase activity"/>
    <property type="evidence" value="ECO:0007669"/>
    <property type="project" value="UniProtKB-UniRule"/>
</dbReference>
<dbReference type="GO" id="GO:0006646">
    <property type="term" value="P:phosphatidylethanolamine biosynthetic process"/>
    <property type="evidence" value="ECO:0007669"/>
    <property type="project" value="UniProtKB-UniRule"/>
</dbReference>
<dbReference type="HAMAP" id="MF_00662">
    <property type="entry name" value="PS_decarb_PSD_B_type1"/>
    <property type="match status" value="1"/>
</dbReference>
<dbReference type="InterPro" id="IPR003817">
    <property type="entry name" value="PS_Dcarbxylase"/>
</dbReference>
<dbReference type="InterPro" id="IPR033177">
    <property type="entry name" value="PSD-B"/>
</dbReference>
<dbReference type="InterPro" id="IPR033178">
    <property type="entry name" value="PSD_type1_pro"/>
</dbReference>
<dbReference type="NCBIfam" id="TIGR00163">
    <property type="entry name" value="PS_decarb"/>
    <property type="match status" value="1"/>
</dbReference>
<dbReference type="PANTHER" id="PTHR10067">
    <property type="entry name" value="PHOSPHATIDYLSERINE DECARBOXYLASE"/>
    <property type="match status" value="1"/>
</dbReference>
<dbReference type="PANTHER" id="PTHR10067:SF6">
    <property type="entry name" value="PHOSPHATIDYLSERINE DECARBOXYLASE PROENZYME, MITOCHONDRIAL"/>
    <property type="match status" value="1"/>
</dbReference>
<dbReference type="Pfam" id="PF02666">
    <property type="entry name" value="PS_Dcarbxylase"/>
    <property type="match status" value="1"/>
</dbReference>
<evidence type="ECO:0000255" key="1">
    <source>
        <dbReference type="HAMAP-Rule" id="MF_00662"/>
    </source>
</evidence>
<protein>
    <recommendedName>
        <fullName evidence="1">Phosphatidylserine decarboxylase proenzyme</fullName>
        <ecNumber evidence="1">4.1.1.65</ecNumber>
    </recommendedName>
    <component>
        <recommendedName>
            <fullName evidence="1">Phosphatidylserine decarboxylase alpha chain</fullName>
        </recommendedName>
    </component>
    <component>
        <recommendedName>
            <fullName evidence="1">Phosphatidylserine decarboxylase beta chain</fullName>
        </recommendedName>
    </component>
</protein>